<reference key="1">
    <citation type="submission" date="1992-02" db="EMBL/GenBank/DDBJ databases">
        <authorList>
            <person name="Erion J.L."/>
            <person name="Ballo B."/>
            <person name="May L."/>
            <person name="Bussell J."/>
            <person name="Fox T.W."/>
            <person name="Thomas S.R."/>
        </authorList>
    </citation>
    <scope>NUCLEOTIDE SEQUENCE</scope>
</reference>
<reference key="2">
    <citation type="journal article" date="1992" name="Biosci. Biotechnol. Biochem.">
        <title>Partial sequence of acid phosphatase-1(1) gene (Aps-1(1)) linked to nematode resistance gene (Mi) of tomato.</title>
        <authorList>
            <person name="Tanaka H."/>
            <person name="Hoshi J."/>
            <person name="Nakata K."/>
            <person name="Chung I.K."/>
            <person name="Ito T."/>
            <person name="Ohta A."/>
            <person name="Takagi M."/>
        </authorList>
    </citation>
    <scope>NUCLEOTIDE SEQUENCE [MRNA] OF 48-221</scope>
</reference>
<accession>P27061</accession>
<accession>Q41173</accession>
<sequence length="255" mass="29433">MRIFVFLVLLTVAIGTENLNSHVFPRPLIIEYPEKQLRDELKCTTWRFVVETNNLSPWKTIPEECADYVKEYMVGPGYKMEIDRVSDEAGEYAKSVDLGDDGRDVWIFDVDETLLSNLPYYSDHRYGLEVFDDVEFDKWVENGTAPALGSSLKLYQEVLKLGFKVFLLTGRSERHRSVTVENLMNAGFHDWHKLILRGSDDHGKTATTYKSERRNAMVEEGFRIVGNSGDQWSDLLGSSMSYRSFKLPNPMYYIL</sequence>
<dbReference type="EC" id="3.1.3.2"/>
<dbReference type="EMBL" id="M67474">
    <property type="protein sequence ID" value="AAA34135.1"/>
    <property type="molecule type" value="mRNA"/>
</dbReference>
<dbReference type="EMBL" id="M83211">
    <property type="protein sequence ID" value="AAA34134.1"/>
    <property type="molecule type" value="Genomic_DNA"/>
</dbReference>
<dbReference type="EMBL" id="S37645">
    <property type="protein sequence ID" value="AAC60539.2"/>
    <property type="molecule type" value="mRNA"/>
</dbReference>
<dbReference type="PIR" id="T06587">
    <property type="entry name" value="T06587"/>
</dbReference>
<dbReference type="SMR" id="P27061"/>
<dbReference type="FunCoup" id="P27061">
    <property type="interactions" value="227"/>
</dbReference>
<dbReference type="STRING" id="4081.P27061"/>
<dbReference type="GlyCosmos" id="P27061">
    <property type="glycosylation" value="1 site, No reported glycans"/>
</dbReference>
<dbReference type="PaxDb" id="4081-Solyc06g034110.2.1"/>
<dbReference type="eggNOG" id="ENOG502QQIP">
    <property type="taxonomic scope" value="Eukaryota"/>
</dbReference>
<dbReference type="InParanoid" id="P27061"/>
<dbReference type="Proteomes" id="UP000004994">
    <property type="component" value="Unplaced"/>
</dbReference>
<dbReference type="ExpressionAtlas" id="P27061">
    <property type="expression patterns" value="baseline and differential"/>
</dbReference>
<dbReference type="GO" id="GO:0003993">
    <property type="term" value="F:acid phosphatase activity"/>
    <property type="evidence" value="ECO:0007669"/>
    <property type="project" value="UniProtKB-EC"/>
</dbReference>
<dbReference type="CDD" id="cd07535">
    <property type="entry name" value="HAD_VSP"/>
    <property type="match status" value="1"/>
</dbReference>
<dbReference type="Gene3D" id="3.40.50.1000">
    <property type="entry name" value="HAD superfamily/HAD-like"/>
    <property type="match status" value="1"/>
</dbReference>
<dbReference type="InterPro" id="IPR005519">
    <property type="entry name" value="Acid_phosphat_B-like"/>
</dbReference>
<dbReference type="InterPro" id="IPR010028">
    <property type="entry name" value="Acid_phosphatase_pln"/>
</dbReference>
<dbReference type="InterPro" id="IPR014403">
    <property type="entry name" value="APS1/VSP"/>
</dbReference>
<dbReference type="InterPro" id="IPR036412">
    <property type="entry name" value="HAD-like_sf"/>
</dbReference>
<dbReference type="InterPro" id="IPR023214">
    <property type="entry name" value="HAD_sf"/>
</dbReference>
<dbReference type="NCBIfam" id="TIGR01675">
    <property type="entry name" value="plant-AP"/>
    <property type="match status" value="1"/>
</dbReference>
<dbReference type="PANTHER" id="PTHR31284">
    <property type="entry name" value="ACID PHOSPHATASE-LIKE PROTEIN"/>
    <property type="match status" value="1"/>
</dbReference>
<dbReference type="PANTHER" id="PTHR31284:SF7">
    <property type="entry name" value="ACID PHOSPHATASE-LIKE PROTEIN"/>
    <property type="match status" value="1"/>
</dbReference>
<dbReference type="Pfam" id="PF03767">
    <property type="entry name" value="Acid_phosphat_B"/>
    <property type="match status" value="1"/>
</dbReference>
<dbReference type="PIRSF" id="PIRSF002674">
    <property type="entry name" value="VSP"/>
    <property type="match status" value="1"/>
</dbReference>
<dbReference type="SUPFAM" id="SSF56784">
    <property type="entry name" value="HAD-like"/>
    <property type="match status" value="1"/>
</dbReference>
<gene>
    <name type="primary">APS1</name>
    <name type="synonym">APS-1(1)</name>
</gene>
<proteinExistence type="evidence at transcript level"/>
<comment type="catalytic activity">
    <reaction>
        <text>a phosphate monoester + H2O = an alcohol + phosphate</text>
        <dbReference type="Rhea" id="RHEA:15017"/>
        <dbReference type="ChEBI" id="CHEBI:15377"/>
        <dbReference type="ChEBI" id="CHEBI:30879"/>
        <dbReference type="ChEBI" id="CHEBI:43474"/>
        <dbReference type="ChEBI" id="CHEBI:67140"/>
        <dbReference type="EC" id="3.1.3.2"/>
    </reaction>
</comment>
<comment type="similarity">
    <text evidence="2">Belongs to the APS1/VSP family.</text>
</comment>
<feature type="signal peptide" evidence="1">
    <location>
        <begin position="1"/>
        <end position="15"/>
    </location>
</feature>
<feature type="chain" id="PRO_0000023986" description="Acid phosphatase 1">
    <location>
        <begin position="16"/>
        <end position="255"/>
    </location>
</feature>
<feature type="glycosylation site" description="N-linked (GlcNAc...) asparagine" evidence="1">
    <location>
        <position position="142"/>
    </location>
</feature>
<feature type="sequence conflict" description="In Ref. 2; AAC60539." evidence="2" ref="2">
    <original>W</original>
    <variation>G</variation>
    <location>
        <position position="58"/>
    </location>
</feature>
<feature type="sequence conflict" description="In Ref. 2; AAC60539." evidence="2" ref="2">
    <original>C</original>
    <variation>G</variation>
    <location>
        <position position="65"/>
    </location>
</feature>
<feature type="sequence conflict" description="In Ref. 2; AAC60539." evidence="2" ref="2">
    <original>L</original>
    <variation>W</variation>
    <location>
        <position position="114"/>
    </location>
</feature>
<keyword id="KW-0325">Glycoprotein</keyword>
<keyword id="KW-0378">Hydrolase</keyword>
<keyword id="KW-1185">Reference proteome</keyword>
<keyword id="KW-0732">Signal</keyword>
<protein>
    <recommendedName>
        <fullName>Acid phosphatase 1</fullName>
        <ecNumber>3.1.3.2</ecNumber>
    </recommendedName>
    <alternativeName>
        <fullName>Apase-1(1)</fullName>
    </alternativeName>
</protein>
<organism>
    <name type="scientific">Solanum lycopersicum</name>
    <name type="common">Tomato</name>
    <name type="synonym">Lycopersicon esculentum</name>
    <dbReference type="NCBI Taxonomy" id="4081"/>
    <lineage>
        <taxon>Eukaryota</taxon>
        <taxon>Viridiplantae</taxon>
        <taxon>Streptophyta</taxon>
        <taxon>Embryophyta</taxon>
        <taxon>Tracheophyta</taxon>
        <taxon>Spermatophyta</taxon>
        <taxon>Magnoliopsida</taxon>
        <taxon>eudicotyledons</taxon>
        <taxon>Gunneridae</taxon>
        <taxon>Pentapetalae</taxon>
        <taxon>asterids</taxon>
        <taxon>lamiids</taxon>
        <taxon>Solanales</taxon>
        <taxon>Solanaceae</taxon>
        <taxon>Solanoideae</taxon>
        <taxon>Solaneae</taxon>
        <taxon>Solanum</taxon>
        <taxon>Solanum subgen. Lycopersicon</taxon>
    </lineage>
</organism>
<evidence type="ECO:0000255" key="1"/>
<evidence type="ECO:0000305" key="2"/>
<name>PPA1_SOLLC</name>